<evidence type="ECO:0000250" key="1">
    <source>
        <dbReference type="UniProtKB" id="Q65188"/>
    </source>
</evidence>
<evidence type="ECO:0000255" key="2"/>
<evidence type="ECO:0000305" key="3"/>
<keyword id="KW-0426">Late protein</keyword>
<keyword id="KW-0472">Membrane</keyword>
<keyword id="KW-0812">Transmembrane</keyword>
<keyword id="KW-1133">Transmembrane helix</keyword>
<keyword id="KW-0946">Virion</keyword>
<feature type="chain" id="PRO_0000373471" description="Inner membrane protein H108R">
    <location>
        <begin position="1"/>
        <end position="110"/>
    </location>
</feature>
<feature type="transmembrane region" description="Helical" evidence="2">
    <location>
        <begin position="10"/>
        <end position="32"/>
    </location>
</feature>
<accession>P0CA13</accession>
<protein>
    <recommendedName>
        <fullName evidence="3">Inner membrane protein H108R</fullName>
        <shortName>pH108R</shortName>
    </recommendedName>
</protein>
<comment type="subcellular location">
    <subcellularLocation>
        <location evidence="1">Virion membrane</location>
        <topology evidence="3">Single-pass membrane protein</topology>
    </subcellularLocation>
    <text evidence="1">Probably part of the inner envelope.</text>
</comment>
<comment type="induction">
    <text evidence="1">Expressed in the late phase of the viral replicative cycle.</text>
</comment>
<comment type="similarity">
    <text evidence="3">Belongs to the asfivirus H108R family.</text>
</comment>
<name>VF108_ASFK5</name>
<dbReference type="EMBL" id="AY261360">
    <property type="status" value="NOT_ANNOTATED_CDS"/>
    <property type="molecule type" value="Genomic_DNA"/>
</dbReference>
<dbReference type="Proteomes" id="UP000000861">
    <property type="component" value="Segment"/>
</dbReference>
<dbReference type="GO" id="GO:0016020">
    <property type="term" value="C:membrane"/>
    <property type="evidence" value="ECO:0007669"/>
    <property type="project" value="UniProtKB-KW"/>
</dbReference>
<dbReference type="GO" id="GO:0055036">
    <property type="term" value="C:virion membrane"/>
    <property type="evidence" value="ECO:0007669"/>
    <property type="project" value="UniProtKB-SubCell"/>
</dbReference>
<gene>
    <name type="ordered locus">Ken-129</name>
</gene>
<reference key="1">
    <citation type="submission" date="2003-03" db="EMBL/GenBank/DDBJ databases">
        <title>African swine fever virus genomes.</title>
        <authorList>
            <person name="Kutish G.F."/>
            <person name="Rock D.L."/>
        </authorList>
    </citation>
    <scope>NUCLEOTIDE SEQUENCE [LARGE SCALE GENOMIC DNA]</scope>
</reference>
<organism>
    <name type="scientific">African swine fever virus (isolate Pig/Kenya/KEN-50/1950)</name>
    <name type="common">ASFV</name>
    <dbReference type="NCBI Taxonomy" id="561445"/>
    <lineage>
        <taxon>Viruses</taxon>
        <taxon>Varidnaviria</taxon>
        <taxon>Bamfordvirae</taxon>
        <taxon>Nucleocytoviricota</taxon>
        <taxon>Pokkesviricetes</taxon>
        <taxon>Asfuvirales</taxon>
        <taxon>Asfarviridae</taxon>
        <taxon>Asfivirus</taxon>
        <taxon>African swine fever virus</taxon>
    </lineage>
</organism>
<proteinExistence type="inferred from homology"/>
<organismHost>
    <name type="scientific">Ornithodoros</name>
    <name type="common">relapsing fever ticks</name>
    <dbReference type="NCBI Taxonomy" id="6937"/>
</organismHost>
<organismHost>
    <name type="scientific">Phacochoerus aethiopicus</name>
    <name type="common">Warthog</name>
    <dbReference type="NCBI Taxonomy" id="85517"/>
</organismHost>
<organismHost>
    <name type="scientific">Phacochoerus africanus</name>
    <name type="common">Warthog</name>
    <dbReference type="NCBI Taxonomy" id="41426"/>
</organismHost>
<organismHost>
    <name type="scientific">Potamochoerus larvatus</name>
    <name type="common">Bushpig</name>
    <dbReference type="NCBI Taxonomy" id="273792"/>
</organismHost>
<organismHost>
    <name type="scientific">Sus scrofa</name>
    <name type="common">Pig</name>
    <dbReference type="NCBI Taxonomy" id="9823"/>
</organismHost>
<sequence length="110" mass="12732">MVNLFPVFTLIVIITILITTRELSTTMLIVSLVTDYIIINTQYTEQHEMNKFSAQQGLQKNSFDESYNKDKKPNTHISYQWLAPELKEAENKYWWGNDDPYSQPVLAGAS</sequence>